<keyword id="KW-0002">3D-structure</keyword>
<keyword id="KW-0240">DNA-directed RNA polymerase</keyword>
<keyword id="KW-0460">Magnesium</keyword>
<keyword id="KW-0479">Metal-binding</keyword>
<keyword id="KW-0548">Nucleotidyltransferase</keyword>
<keyword id="KW-0539">Nucleus</keyword>
<keyword id="KW-1185">Reference proteome</keyword>
<keyword id="KW-0804">Transcription</keyword>
<keyword id="KW-0808">Transferase</keyword>
<keyword id="KW-0862">Zinc</keyword>
<keyword id="KW-0863">Zinc-finger</keyword>
<dbReference type="EC" id="2.7.7.6"/>
<dbReference type="EMBL" id="D13337">
    <property type="protein sequence ID" value="BAA02600.1"/>
    <property type="molecule type" value="Genomic_DNA"/>
</dbReference>
<dbReference type="EMBL" id="CU329670">
    <property type="protein sequence ID" value="CAB86470.2"/>
    <property type="molecule type" value="Genomic_DNA"/>
</dbReference>
<dbReference type="PIR" id="S35548">
    <property type="entry name" value="S35548"/>
</dbReference>
<dbReference type="PIR" id="T50175">
    <property type="entry name" value="T50175"/>
</dbReference>
<dbReference type="RefSeq" id="NP_593101.2">
    <property type="nucleotide sequence ID" value="NM_001018498.2"/>
</dbReference>
<dbReference type="PDB" id="3H0G">
    <property type="method" value="X-ray"/>
    <property type="resolution" value="3.65 A"/>
    <property type="chains" value="B/N=1-1210"/>
</dbReference>
<dbReference type="PDB" id="5U0S">
    <property type="method" value="EM"/>
    <property type="resolution" value="7.80 A"/>
    <property type="chains" value="b=1-1210"/>
</dbReference>
<dbReference type="PDB" id="8QSZ">
    <property type="method" value="EM"/>
    <property type="resolution" value="2.67 A"/>
    <property type="chains" value="B=1-1210"/>
</dbReference>
<dbReference type="PDBsum" id="3H0G"/>
<dbReference type="PDBsum" id="5U0S"/>
<dbReference type="PDBsum" id="8QSZ"/>
<dbReference type="EMDB" id="EMD-18643"/>
<dbReference type="EMDB" id="EMD-8480"/>
<dbReference type="SMR" id="Q02061"/>
<dbReference type="BioGRID" id="277951">
    <property type="interactions" value="24"/>
</dbReference>
<dbReference type="ComplexPortal" id="CPX-2661">
    <property type="entry name" value="DNA-directed RNA polymerase II complex"/>
</dbReference>
<dbReference type="FunCoup" id="Q02061">
    <property type="interactions" value="507"/>
</dbReference>
<dbReference type="IntAct" id="Q02061">
    <property type="interactions" value="2"/>
</dbReference>
<dbReference type="MINT" id="Q02061"/>
<dbReference type="STRING" id="284812.Q02061"/>
<dbReference type="iPTMnet" id="Q02061"/>
<dbReference type="PaxDb" id="4896-SPAC23G3.01.1"/>
<dbReference type="EnsemblFungi" id="SPAC23G3.01.1">
    <property type="protein sequence ID" value="SPAC23G3.01.1:pep"/>
    <property type="gene ID" value="SPAC23G3.01"/>
</dbReference>
<dbReference type="GeneID" id="2541446"/>
<dbReference type="KEGG" id="spo:2541446"/>
<dbReference type="PomBase" id="SPAC23G3.01">
    <property type="gene designation" value="rpb2"/>
</dbReference>
<dbReference type="VEuPathDB" id="FungiDB:SPAC23G3.01"/>
<dbReference type="eggNOG" id="KOG0214">
    <property type="taxonomic scope" value="Eukaryota"/>
</dbReference>
<dbReference type="HOGENOM" id="CLU_000524_5_2_1"/>
<dbReference type="InParanoid" id="Q02061"/>
<dbReference type="OMA" id="CYDRNDS"/>
<dbReference type="PhylomeDB" id="Q02061"/>
<dbReference type="Reactome" id="R-SPO-113418">
    <property type="pathway name" value="Formation of the Early Elongation Complex"/>
</dbReference>
<dbReference type="Reactome" id="R-SPO-5578749">
    <property type="pathway name" value="Transcriptional regulation by small RNAs"/>
</dbReference>
<dbReference type="Reactome" id="R-SPO-674695">
    <property type="pathway name" value="RNA Polymerase II Pre-transcription Events"/>
</dbReference>
<dbReference type="Reactome" id="R-SPO-6781823">
    <property type="pathway name" value="Formation of TC-NER Pre-Incision Complex"/>
</dbReference>
<dbReference type="Reactome" id="R-SPO-6782135">
    <property type="pathway name" value="Dual incision in TC-NER"/>
</dbReference>
<dbReference type="Reactome" id="R-SPO-6782210">
    <property type="pathway name" value="Gap-filling DNA repair synthesis and ligation in TC-NER"/>
</dbReference>
<dbReference type="Reactome" id="R-SPO-6796648">
    <property type="pathway name" value="TP53 Regulates Transcription of DNA Repair Genes"/>
</dbReference>
<dbReference type="Reactome" id="R-SPO-6807505">
    <property type="pathway name" value="RNA polymerase II transcribes snRNA genes"/>
</dbReference>
<dbReference type="Reactome" id="R-SPO-72086">
    <property type="pathway name" value="mRNA Capping"/>
</dbReference>
<dbReference type="Reactome" id="R-SPO-72163">
    <property type="pathway name" value="mRNA Splicing - Major Pathway"/>
</dbReference>
<dbReference type="Reactome" id="R-SPO-72203">
    <property type="pathway name" value="Processing of Capped Intron-Containing Pre-mRNA"/>
</dbReference>
<dbReference type="Reactome" id="R-SPO-73776">
    <property type="pathway name" value="RNA Polymerase II Promoter Escape"/>
</dbReference>
<dbReference type="Reactome" id="R-SPO-73779">
    <property type="pathway name" value="RNA Polymerase II Transcription Pre-Initiation And Promoter Opening"/>
</dbReference>
<dbReference type="Reactome" id="R-SPO-75953">
    <property type="pathway name" value="RNA Polymerase II Transcription Initiation"/>
</dbReference>
<dbReference type="Reactome" id="R-SPO-76042">
    <property type="pathway name" value="RNA Polymerase II Transcription Initiation And Promoter Clearance"/>
</dbReference>
<dbReference type="Reactome" id="R-SPO-77075">
    <property type="pathway name" value="RNA Pol II CTD phosphorylation and interaction with CE"/>
</dbReference>
<dbReference type="Reactome" id="R-SPO-9018519">
    <property type="pathway name" value="Estrogen-dependent gene expression"/>
</dbReference>
<dbReference type="EvolutionaryTrace" id="Q02061"/>
<dbReference type="PRO" id="PR:Q02061"/>
<dbReference type="Proteomes" id="UP000002485">
    <property type="component" value="Chromosome I"/>
</dbReference>
<dbReference type="GO" id="GO:0005829">
    <property type="term" value="C:cytosol"/>
    <property type="evidence" value="ECO:0007005"/>
    <property type="project" value="PomBase"/>
</dbReference>
<dbReference type="GO" id="GO:0005739">
    <property type="term" value="C:mitochondrion"/>
    <property type="evidence" value="ECO:0007669"/>
    <property type="project" value="GOC"/>
</dbReference>
<dbReference type="GO" id="GO:0005634">
    <property type="term" value="C:nucleus"/>
    <property type="evidence" value="ECO:0007005"/>
    <property type="project" value="PomBase"/>
</dbReference>
<dbReference type="GO" id="GO:0005721">
    <property type="term" value="C:pericentric heterochromatin"/>
    <property type="evidence" value="ECO:0000314"/>
    <property type="project" value="PomBase"/>
</dbReference>
<dbReference type="GO" id="GO:0005665">
    <property type="term" value="C:RNA polymerase II, core complex"/>
    <property type="evidence" value="ECO:0000314"/>
    <property type="project" value="PomBase"/>
</dbReference>
<dbReference type="GO" id="GO:0016591">
    <property type="term" value="C:RNA polymerase II, holoenzyme"/>
    <property type="evidence" value="ECO:0000269"/>
    <property type="project" value="PomBase"/>
</dbReference>
<dbReference type="GO" id="GO:0003677">
    <property type="term" value="F:DNA binding"/>
    <property type="evidence" value="ECO:0007669"/>
    <property type="project" value="InterPro"/>
</dbReference>
<dbReference type="GO" id="GO:0003899">
    <property type="term" value="F:DNA-directed RNA polymerase activity"/>
    <property type="evidence" value="ECO:0007669"/>
    <property type="project" value="UniProtKB-EC"/>
</dbReference>
<dbReference type="GO" id="GO:0032549">
    <property type="term" value="F:ribonucleoside binding"/>
    <property type="evidence" value="ECO:0007669"/>
    <property type="project" value="InterPro"/>
</dbReference>
<dbReference type="GO" id="GO:0003723">
    <property type="term" value="F:RNA binding"/>
    <property type="evidence" value="ECO:0000314"/>
    <property type="project" value="PomBase"/>
</dbReference>
<dbReference type="GO" id="GO:0008270">
    <property type="term" value="F:zinc ion binding"/>
    <property type="evidence" value="ECO:0007669"/>
    <property type="project" value="UniProtKB-KW"/>
</dbReference>
<dbReference type="GO" id="GO:0140727">
    <property type="term" value="P:siRNA-mediated pericentric heterochromatin formation"/>
    <property type="evidence" value="ECO:0000315"/>
    <property type="project" value="PomBase"/>
</dbReference>
<dbReference type="GO" id="GO:0006366">
    <property type="term" value="P:transcription by RNA polymerase II"/>
    <property type="evidence" value="ECO:0000316"/>
    <property type="project" value="PomBase"/>
</dbReference>
<dbReference type="GO" id="GO:0006367">
    <property type="term" value="P:transcription initiation at RNA polymerase II promoter"/>
    <property type="evidence" value="ECO:0000314"/>
    <property type="project" value="PomBase"/>
</dbReference>
<dbReference type="CDD" id="cd00653">
    <property type="entry name" value="RNA_pol_B_RPB2"/>
    <property type="match status" value="1"/>
</dbReference>
<dbReference type="FunFam" id="2.40.270.10:FF:000006">
    <property type="entry name" value="DNA-directed RNA polymerase subunit beta"/>
    <property type="match status" value="1"/>
</dbReference>
<dbReference type="FunFam" id="2.40.50.150:FF:000002">
    <property type="entry name" value="DNA-directed RNA polymerase subunit beta"/>
    <property type="match status" value="1"/>
</dbReference>
<dbReference type="FunFam" id="3.90.1070.20:FF:000001">
    <property type="entry name" value="DNA-directed RNA polymerase subunit beta"/>
    <property type="match status" value="1"/>
</dbReference>
<dbReference type="FunFam" id="3.90.1100.10:FF:000003">
    <property type="entry name" value="DNA-directed RNA polymerase subunit beta"/>
    <property type="match status" value="1"/>
</dbReference>
<dbReference type="FunFam" id="3.90.1100.10:FF:000005">
    <property type="entry name" value="DNA-directed RNA polymerase subunit beta"/>
    <property type="match status" value="1"/>
</dbReference>
<dbReference type="FunFam" id="3.90.1110.10:FF:000003">
    <property type="entry name" value="DNA-directed RNA polymerase subunit beta"/>
    <property type="match status" value="1"/>
</dbReference>
<dbReference type="FunFam" id="3.90.1800.10:FF:000002">
    <property type="entry name" value="DNA-directed RNA polymerase subunit beta"/>
    <property type="match status" value="1"/>
</dbReference>
<dbReference type="Gene3D" id="2.40.50.150">
    <property type="match status" value="1"/>
</dbReference>
<dbReference type="Gene3D" id="3.90.1070.20">
    <property type="match status" value="1"/>
</dbReference>
<dbReference type="Gene3D" id="2.40.270.10">
    <property type="entry name" value="DNA-directed RNA polymerase, subunit 2, domain 6"/>
    <property type="match status" value="1"/>
</dbReference>
<dbReference type="Gene3D" id="3.90.1800.10">
    <property type="entry name" value="RNA polymerase alpha subunit dimerisation domain"/>
    <property type="match status" value="1"/>
</dbReference>
<dbReference type="Gene3D" id="3.90.1110.10">
    <property type="entry name" value="RNA polymerase Rpb2, domain 2"/>
    <property type="match status" value="1"/>
</dbReference>
<dbReference type="InterPro" id="IPR015712">
    <property type="entry name" value="DNA-dir_RNA_pol_su2"/>
</dbReference>
<dbReference type="InterPro" id="IPR007120">
    <property type="entry name" value="DNA-dir_RNAP_su2_dom"/>
</dbReference>
<dbReference type="InterPro" id="IPR037033">
    <property type="entry name" value="DNA-dir_RNAP_su2_hyb_sf"/>
</dbReference>
<dbReference type="InterPro" id="IPR007121">
    <property type="entry name" value="RNA_pol_bsu_CS"/>
</dbReference>
<dbReference type="InterPro" id="IPR007644">
    <property type="entry name" value="RNA_pol_bsu_protrusion"/>
</dbReference>
<dbReference type="InterPro" id="IPR007642">
    <property type="entry name" value="RNA_pol_Rpb2_2"/>
</dbReference>
<dbReference type="InterPro" id="IPR037034">
    <property type="entry name" value="RNA_pol_Rpb2_2_sf"/>
</dbReference>
<dbReference type="InterPro" id="IPR007645">
    <property type="entry name" value="RNA_pol_Rpb2_3"/>
</dbReference>
<dbReference type="InterPro" id="IPR007646">
    <property type="entry name" value="RNA_pol_Rpb2_4"/>
</dbReference>
<dbReference type="InterPro" id="IPR007647">
    <property type="entry name" value="RNA_pol_Rpb2_5"/>
</dbReference>
<dbReference type="InterPro" id="IPR007641">
    <property type="entry name" value="RNA_pol_Rpb2_7"/>
</dbReference>
<dbReference type="InterPro" id="IPR014724">
    <property type="entry name" value="RNA_pol_RPB2_OB-fold"/>
</dbReference>
<dbReference type="NCBIfam" id="NF007175">
    <property type="entry name" value="PRK09606.1"/>
    <property type="match status" value="1"/>
</dbReference>
<dbReference type="PANTHER" id="PTHR20856">
    <property type="entry name" value="DNA-DIRECTED RNA POLYMERASE I SUBUNIT 2"/>
    <property type="match status" value="1"/>
</dbReference>
<dbReference type="Pfam" id="PF04563">
    <property type="entry name" value="RNA_pol_Rpb2_1"/>
    <property type="match status" value="1"/>
</dbReference>
<dbReference type="Pfam" id="PF04561">
    <property type="entry name" value="RNA_pol_Rpb2_2"/>
    <property type="match status" value="1"/>
</dbReference>
<dbReference type="Pfam" id="PF04565">
    <property type="entry name" value="RNA_pol_Rpb2_3"/>
    <property type="match status" value="1"/>
</dbReference>
<dbReference type="Pfam" id="PF04566">
    <property type="entry name" value="RNA_pol_Rpb2_4"/>
    <property type="match status" value="1"/>
</dbReference>
<dbReference type="Pfam" id="PF04567">
    <property type="entry name" value="RNA_pol_Rpb2_5"/>
    <property type="match status" value="1"/>
</dbReference>
<dbReference type="Pfam" id="PF00562">
    <property type="entry name" value="RNA_pol_Rpb2_6"/>
    <property type="match status" value="1"/>
</dbReference>
<dbReference type="Pfam" id="PF04560">
    <property type="entry name" value="RNA_pol_Rpb2_7"/>
    <property type="match status" value="1"/>
</dbReference>
<dbReference type="SUPFAM" id="SSF64484">
    <property type="entry name" value="beta and beta-prime subunits of DNA dependent RNA-polymerase"/>
    <property type="match status" value="1"/>
</dbReference>
<dbReference type="PROSITE" id="PS01166">
    <property type="entry name" value="RNA_POL_BETA"/>
    <property type="match status" value="1"/>
</dbReference>
<proteinExistence type="evidence at protein level"/>
<sequence length="1210" mass="137849">MSYEDYQYNETLTQEDCWTVISSFFEETSLARQQLFSFDEFVQNTMQEIVDDDSTLTLDQYAQHTGAQGDVTRRYEINFGQIYLSRPTMTEADGSTTTMFPQEARLRNLTYSSPLYVDMRKKVMVAADSNVPIGEEEWLVEEEDEEPSKVFIGKIPIMLRSTFCILNGVSDSELYDLNECPYDQGGYFIINGSEKVIIAQERSAANIVQVFKKAAPSPIAYVAEIRSALERGSRLISSMQIKLMARNTENSGQTIRATLPYIRSDIPIVIVFRALGVVPDRDILEHICYDPNDFQMLEMMKPCIEEAFVIQDKDIALDYIGKRGSTTGVTREKRLRYAHDILQKELLPHITTMEGFETRKAFFLGYMIHRMLLCALERREPDDRDHFGKKRLDLAGPLLASLFRMLFRKMTRDVYKYMQKCVETNREFNLTLAVKSNIITNGLRYSLATGNWGDQKRSMVNRVGVSQVLNRYTFASTLSHLRRTNTPIGRDGKLAKPRQLHNTHWGMVCPAETPEGQACGLVKNLSLMSYVSVGSPSAPIIEFLEEWGLETLEDYNPSASPNATKVFVNGVWLGVHRDPAHLTETLRSLRRRLDISAEVSIVRDIREKELRLFTDAGRICRPLFIVDNNPNSERRGELCIRKEHIQQLIEDKDRYDIDPEQRFGWTALVSSGLIEYLDAEEEETVMIAMSPEDLEASRQMQAGYEVKEELDPAQRVKPAPNPHVHAWTHCEIHPAMILGILASIIPFPDHNQSPRNTYQSAMGKQAMGVYLTNYQVRMDTMANILYYPQKPLATTRSMEYLKFRELPAGQNAIVAILCYSGYNQEDSIIMNQASIDRGLFRSIFYRTYTDQEKKIGMTVMEEFERPVRSTTLRMKHGTYDKLEDDGLIAPGTRVSGEDIIIGKTAPIPLDHEELGQRTQLHAKRDVSTPLRSTESGIVDQVMVTTNQEGLKFVKVRMRSTRIPQIGDKFASRHGQKGTIGMTYRHEDMPFSAQGIVPDIIINPHAIPSRMTVAHLVECQLSKVSALSGFEGDATPFTDVTVEAVSKLLRSHGFQSRGFEVMYHGHTGRKLVAQVFLGPTYYQRLKHLVDDKIHARARGPVQILTRQPVEGRSRDGGLRFGEMERDCQISHGCSSVLRERLFDCSDAYRVIVCDICGLIAIASYKKDSYECRSCQNRTRFSQVYLPYAAKLLFQELMSMNIAPRLFTKNHK</sequence>
<reference key="1">
    <citation type="journal article" date="1993" name="Nucleic Acids Res.">
        <title>Cloning and sequence determination of the Schizosaccharomyces pombe rpb2 gene encoding the subunit 2 of RNA polymerase II.</title>
        <authorList>
            <person name="Kawagishi M."/>
            <person name="Yamagishi M."/>
            <person name="Ishihama A."/>
        </authorList>
    </citation>
    <scope>NUCLEOTIDE SEQUENCE [GENOMIC DNA]</scope>
</reference>
<reference key="2">
    <citation type="journal article" date="2002" name="Nature">
        <title>The genome sequence of Schizosaccharomyces pombe.</title>
        <authorList>
            <person name="Wood V."/>
            <person name="Gwilliam R."/>
            <person name="Rajandream M.A."/>
            <person name="Lyne M.H."/>
            <person name="Lyne R."/>
            <person name="Stewart A."/>
            <person name="Sgouros J.G."/>
            <person name="Peat N."/>
            <person name="Hayles J."/>
            <person name="Baker S.G."/>
            <person name="Basham D."/>
            <person name="Bowman S."/>
            <person name="Brooks K."/>
            <person name="Brown D."/>
            <person name="Brown S."/>
            <person name="Chillingworth T."/>
            <person name="Churcher C.M."/>
            <person name="Collins M."/>
            <person name="Connor R."/>
            <person name="Cronin A."/>
            <person name="Davis P."/>
            <person name="Feltwell T."/>
            <person name="Fraser A."/>
            <person name="Gentles S."/>
            <person name="Goble A."/>
            <person name="Hamlin N."/>
            <person name="Harris D.E."/>
            <person name="Hidalgo J."/>
            <person name="Hodgson G."/>
            <person name="Holroyd S."/>
            <person name="Hornsby T."/>
            <person name="Howarth S."/>
            <person name="Huckle E.J."/>
            <person name="Hunt S."/>
            <person name="Jagels K."/>
            <person name="James K.D."/>
            <person name="Jones L."/>
            <person name="Jones M."/>
            <person name="Leather S."/>
            <person name="McDonald S."/>
            <person name="McLean J."/>
            <person name="Mooney P."/>
            <person name="Moule S."/>
            <person name="Mungall K.L."/>
            <person name="Murphy L.D."/>
            <person name="Niblett D."/>
            <person name="Odell C."/>
            <person name="Oliver K."/>
            <person name="O'Neil S."/>
            <person name="Pearson D."/>
            <person name="Quail M.A."/>
            <person name="Rabbinowitsch E."/>
            <person name="Rutherford K.M."/>
            <person name="Rutter S."/>
            <person name="Saunders D."/>
            <person name="Seeger K."/>
            <person name="Sharp S."/>
            <person name="Skelton J."/>
            <person name="Simmonds M.N."/>
            <person name="Squares R."/>
            <person name="Squares S."/>
            <person name="Stevens K."/>
            <person name="Taylor K."/>
            <person name="Taylor R.G."/>
            <person name="Tivey A."/>
            <person name="Walsh S.V."/>
            <person name="Warren T."/>
            <person name="Whitehead S."/>
            <person name="Woodward J.R."/>
            <person name="Volckaert G."/>
            <person name="Aert R."/>
            <person name="Robben J."/>
            <person name="Grymonprez B."/>
            <person name="Weltjens I."/>
            <person name="Vanstreels E."/>
            <person name="Rieger M."/>
            <person name="Schaefer M."/>
            <person name="Mueller-Auer S."/>
            <person name="Gabel C."/>
            <person name="Fuchs M."/>
            <person name="Duesterhoeft A."/>
            <person name="Fritzc C."/>
            <person name="Holzer E."/>
            <person name="Moestl D."/>
            <person name="Hilbert H."/>
            <person name="Borzym K."/>
            <person name="Langer I."/>
            <person name="Beck A."/>
            <person name="Lehrach H."/>
            <person name="Reinhardt R."/>
            <person name="Pohl T.M."/>
            <person name="Eger P."/>
            <person name="Zimmermann W."/>
            <person name="Wedler H."/>
            <person name="Wambutt R."/>
            <person name="Purnelle B."/>
            <person name="Goffeau A."/>
            <person name="Cadieu E."/>
            <person name="Dreano S."/>
            <person name="Gloux S."/>
            <person name="Lelaure V."/>
            <person name="Mottier S."/>
            <person name="Galibert F."/>
            <person name="Aves S.J."/>
            <person name="Xiang Z."/>
            <person name="Hunt C."/>
            <person name="Moore K."/>
            <person name="Hurst S.M."/>
            <person name="Lucas M."/>
            <person name="Rochet M."/>
            <person name="Gaillardin C."/>
            <person name="Tallada V.A."/>
            <person name="Garzon A."/>
            <person name="Thode G."/>
            <person name="Daga R.R."/>
            <person name="Cruzado L."/>
            <person name="Jimenez J."/>
            <person name="Sanchez M."/>
            <person name="del Rey F."/>
            <person name="Benito J."/>
            <person name="Dominguez A."/>
            <person name="Revuelta J.L."/>
            <person name="Moreno S."/>
            <person name="Armstrong J."/>
            <person name="Forsburg S.L."/>
            <person name="Cerutti L."/>
            <person name="Lowe T."/>
            <person name="McCombie W.R."/>
            <person name="Paulsen I."/>
            <person name="Potashkin J."/>
            <person name="Shpakovski G.V."/>
            <person name="Ussery D."/>
            <person name="Barrell B.G."/>
            <person name="Nurse P."/>
        </authorList>
    </citation>
    <scope>NUCLEOTIDE SEQUENCE [LARGE SCALE GENOMIC DNA]</scope>
    <source>
        <strain>972 / ATCC 24843</strain>
    </source>
</reference>
<evidence type="ECO:0000250" key="1"/>
<evidence type="ECO:0000305" key="2"/>
<evidence type="ECO:0007829" key="3">
    <source>
        <dbReference type="PDB" id="8QSZ"/>
    </source>
</evidence>
<comment type="function">
    <text evidence="1">DNA-dependent RNA polymerase catalyzes the transcription of DNA into RNA using the four ribonucleoside triphosphates as substrates. Second largest component of RNA polymerase II which synthesizes mRNA precursors and many functional non-coding RNAs. Proposed to contribute to the polymerase catalytic activity and forms the polymerase active center together with the largest subunit. Pol II is the central component of the basal RNA polymerase II transcription machinery. It is composed of mobile elements that move relative to each other. RPB2 is part of the core element with the central large cleft, the clamp element that moves to open and close the cleft and the jaws that are thought to grab the incoming DNA template (By similarity).</text>
</comment>
<comment type="catalytic activity">
    <reaction>
        <text>RNA(n) + a ribonucleoside 5'-triphosphate = RNA(n+1) + diphosphate</text>
        <dbReference type="Rhea" id="RHEA:21248"/>
        <dbReference type="Rhea" id="RHEA-COMP:14527"/>
        <dbReference type="Rhea" id="RHEA-COMP:17342"/>
        <dbReference type="ChEBI" id="CHEBI:33019"/>
        <dbReference type="ChEBI" id="CHEBI:61557"/>
        <dbReference type="ChEBI" id="CHEBI:140395"/>
        <dbReference type="EC" id="2.7.7.6"/>
    </reaction>
</comment>
<comment type="subunit">
    <text evidence="1">Component of the RNA polymerase II (Pol II) complex consisting of 12 subunits.</text>
</comment>
<comment type="subcellular location">
    <subcellularLocation>
        <location evidence="1">Nucleus</location>
    </subcellularLocation>
</comment>
<comment type="miscellaneous">
    <text evidence="1">The binding of ribonucleoside triphosphate to the RNA polymerase II transcribing complex probably involves a two-step mechanism. The initial binding seems to occur at the entry (E) site and involves a magnesium ion coordinated by three conserved aspartate residues of the two largest RNA Pol II subunits (By similarity).</text>
</comment>
<comment type="similarity">
    <text evidence="2">Belongs to the RNA polymerase beta chain family.</text>
</comment>
<name>RPB2_SCHPO</name>
<accession>Q02061</accession>
<accession>Q9P7B1</accession>
<accession>Q9P7T2</accession>
<organism>
    <name type="scientific">Schizosaccharomyces pombe (strain 972 / ATCC 24843)</name>
    <name type="common">Fission yeast</name>
    <dbReference type="NCBI Taxonomy" id="284812"/>
    <lineage>
        <taxon>Eukaryota</taxon>
        <taxon>Fungi</taxon>
        <taxon>Dikarya</taxon>
        <taxon>Ascomycota</taxon>
        <taxon>Taphrinomycotina</taxon>
        <taxon>Schizosaccharomycetes</taxon>
        <taxon>Schizosaccharomycetales</taxon>
        <taxon>Schizosaccharomycetaceae</taxon>
        <taxon>Schizosaccharomyces</taxon>
    </lineage>
</organism>
<gene>
    <name type="primary">rpb2</name>
    <name type="ORF">SPAC23G3.01</name>
    <name type="ORF">SPAC521.06</name>
</gene>
<feature type="chain" id="PRO_0000048090" description="DNA-directed RNA polymerase II subunit RPB2">
    <location>
        <begin position="1"/>
        <end position="1210"/>
    </location>
</feature>
<feature type="zinc finger region" description="C4-type">
    <location>
        <begin position="1152"/>
        <end position="1173"/>
    </location>
</feature>
<feature type="binding site" evidence="1">
    <location>
        <position position="826"/>
    </location>
    <ligand>
        <name>Mg(2+)</name>
        <dbReference type="ChEBI" id="CHEBI:18420"/>
        <note>ligand shared with RPB1</note>
    </ligand>
</feature>
<feature type="binding site" evidence="1">
    <location>
        <position position="1152"/>
    </location>
    <ligand>
        <name>Zn(2+)</name>
        <dbReference type="ChEBI" id="CHEBI:29105"/>
    </ligand>
</feature>
<feature type="binding site" evidence="1">
    <location>
        <position position="1155"/>
    </location>
    <ligand>
        <name>Zn(2+)</name>
        <dbReference type="ChEBI" id="CHEBI:29105"/>
    </ligand>
</feature>
<feature type="binding site" evidence="1">
    <location>
        <position position="1170"/>
    </location>
    <ligand>
        <name>Zn(2+)</name>
        <dbReference type="ChEBI" id="CHEBI:29105"/>
    </ligand>
</feature>
<feature type="binding site" evidence="1">
    <location>
        <position position="1173"/>
    </location>
    <ligand>
        <name>Zn(2+)</name>
        <dbReference type="ChEBI" id="CHEBI:29105"/>
    </ligand>
</feature>
<feature type="sequence conflict" description="In Ref. 1; BAA02600." evidence="2" ref="1">
    <original>W</original>
    <variation>R</variation>
    <location>
        <position position="727"/>
    </location>
</feature>
<feature type="helix" evidence="3">
    <location>
        <begin position="14"/>
        <end position="27"/>
    </location>
</feature>
<feature type="helix" evidence="3">
    <location>
        <begin position="32"/>
        <end position="43"/>
    </location>
</feature>
<feature type="helix" evidence="3">
    <location>
        <begin position="45"/>
        <end position="52"/>
    </location>
</feature>
<feature type="strand" evidence="3">
    <location>
        <begin position="55"/>
        <end position="60"/>
    </location>
</feature>
<feature type="strand" evidence="3">
    <location>
        <begin position="73"/>
        <end position="84"/>
    </location>
</feature>
<feature type="strand" evidence="3">
    <location>
        <begin position="88"/>
        <end position="90"/>
    </location>
</feature>
<feature type="strand" evidence="3">
    <location>
        <begin position="96"/>
        <end position="98"/>
    </location>
</feature>
<feature type="helix" evidence="3">
    <location>
        <begin position="101"/>
        <end position="107"/>
    </location>
</feature>
<feature type="strand" evidence="3">
    <location>
        <begin position="112"/>
        <end position="127"/>
    </location>
</feature>
<feature type="strand" evidence="3">
    <location>
        <begin position="138"/>
        <end position="143"/>
    </location>
</feature>
<feature type="strand" evidence="3">
    <location>
        <begin position="148"/>
        <end position="156"/>
    </location>
</feature>
<feature type="turn" evidence="3">
    <location>
        <begin position="165"/>
        <end position="168"/>
    </location>
</feature>
<feature type="helix" evidence="3">
    <location>
        <begin position="171"/>
        <end position="176"/>
    </location>
</feature>
<feature type="strand" evidence="3">
    <location>
        <begin position="188"/>
        <end position="190"/>
    </location>
</feature>
<feature type="strand" evidence="3">
    <location>
        <begin position="193"/>
        <end position="197"/>
    </location>
</feature>
<feature type="strand" evidence="3">
    <location>
        <begin position="199"/>
        <end position="203"/>
    </location>
</feature>
<feature type="strand" evidence="3">
    <location>
        <begin position="208"/>
        <end position="212"/>
    </location>
</feature>
<feature type="strand" evidence="3">
    <location>
        <begin position="218"/>
        <end position="227"/>
    </location>
</feature>
<feature type="strand" evidence="3">
    <location>
        <begin position="230"/>
        <end position="234"/>
    </location>
</feature>
<feature type="strand" evidence="3">
    <location>
        <begin position="237"/>
        <end position="244"/>
    </location>
</feature>
<feature type="strand" evidence="3">
    <location>
        <begin position="255"/>
        <end position="258"/>
    </location>
</feature>
<feature type="strand" evidence="3">
    <location>
        <begin position="262"/>
        <end position="264"/>
    </location>
</feature>
<feature type="helix" evidence="3">
    <location>
        <begin position="268"/>
        <end position="274"/>
    </location>
</feature>
<feature type="helix" evidence="3">
    <location>
        <begin position="280"/>
        <end position="287"/>
    </location>
</feature>
<feature type="helix" evidence="3">
    <location>
        <begin position="294"/>
        <end position="306"/>
    </location>
</feature>
<feature type="helix" evidence="3">
    <location>
        <begin position="313"/>
        <end position="322"/>
    </location>
</feature>
<feature type="helix" evidence="3">
    <location>
        <begin position="331"/>
        <end position="344"/>
    </location>
</feature>
<feature type="turn" evidence="3">
    <location>
        <begin position="348"/>
        <end position="350"/>
    </location>
</feature>
<feature type="helix" evidence="3">
    <location>
        <begin position="357"/>
        <end position="375"/>
    </location>
</feature>
<feature type="helix" evidence="3">
    <location>
        <begin position="387"/>
        <end position="389"/>
    </location>
</feature>
<feature type="strand" evidence="3">
    <location>
        <begin position="390"/>
        <end position="393"/>
    </location>
</feature>
<feature type="helix" evidence="3">
    <location>
        <begin position="395"/>
        <end position="424"/>
    </location>
</feature>
<feature type="helix" evidence="3">
    <location>
        <begin position="430"/>
        <end position="433"/>
    </location>
</feature>
<feature type="helix" evidence="3">
    <location>
        <begin position="437"/>
        <end position="449"/>
    </location>
</feature>
<feature type="helix" evidence="3">
    <location>
        <begin position="455"/>
        <end position="457"/>
    </location>
</feature>
<feature type="turn" evidence="3">
    <location>
        <begin position="458"/>
        <end position="460"/>
    </location>
</feature>
<feature type="strand" evidence="3">
    <location>
        <begin position="465"/>
        <end position="468"/>
    </location>
</feature>
<feature type="helix" evidence="3">
    <location>
        <begin position="474"/>
        <end position="480"/>
    </location>
</feature>
<feature type="strand" evidence="3">
    <location>
        <begin position="483"/>
        <end position="485"/>
    </location>
</feature>
<feature type="strand" evidence="3">
    <location>
        <begin position="490"/>
        <end position="492"/>
    </location>
</feature>
<feature type="helix" evidence="3">
    <location>
        <begin position="495"/>
        <end position="498"/>
    </location>
</feature>
<feature type="helix" evidence="3">
    <location>
        <begin position="502"/>
        <end position="504"/>
    </location>
</feature>
<feature type="turn" evidence="3">
    <location>
        <begin position="505"/>
        <end position="507"/>
    </location>
</feature>
<feature type="strand" evidence="3">
    <location>
        <begin position="522"/>
        <end position="525"/>
    </location>
</feature>
<feature type="helix" evidence="3">
    <location>
        <begin position="538"/>
        <end position="546"/>
    </location>
</feature>
<feature type="strand" evidence="3">
    <location>
        <begin position="550"/>
        <end position="554"/>
    </location>
</feature>
<feature type="turn" evidence="3">
    <location>
        <begin position="557"/>
        <end position="559"/>
    </location>
</feature>
<feature type="strand" evidence="3">
    <location>
        <begin position="561"/>
        <end position="568"/>
    </location>
</feature>
<feature type="strand" evidence="3">
    <location>
        <begin position="571"/>
        <end position="577"/>
    </location>
</feature>
<feature type="helix" evidence="3">
    <location>
        <begin position="579"/>
        <end position="590"/>
    </location>
</feature>
<feature type="turn" evidence="3">
    <location>
        <begin position="591"/>
        <end position="593"/>
    </location>
</feature>
<feature type="strand" evidence="3">
    <location>
        <begin position="600"/>
        <end position="604"/>
    </location>
</feature>
<feature type="turn" evidence="3">
    <location>
        <begin position="605"/>
        <end position="608"/>
    </location>
</feature>
<feature type="strand" evidence="3">
    <location>
        <begin position="609"/>
        <end position="613"/>
    </location>
</feature>
<feature type="strand" evidence="3">
    <location>
        <begin position="619"/>
        <end position="626"/>
    </location>
</feature>
<feature type="strand" evidence="3">
    <location>
        <begin position="637"/>
        <end position="640"/>
    </location>
</feature>
<feature type="helix" evidence="3">
    <location>
        <begin position="642"/>
        <end position="653"/>
    </location>
</feature>
<feature type="strand" evidence="3">
    <location>
        <begin position="661"/>
        <end position="664"/>
    </location>
</feature>
<feature type="helix" evidence="3">
    <location>
        <begin position="665"/>
        <end position="670"/>
    </location>
</feature>
<feature type="strand" evidence="3">
    <location>
        <begin position="673"/>
        <end position="678"/>
    </location>
</feature>
<feature type="helix" evidence="3">
    <location>
        <begin position="679"/>
        <end position="682"/>
    </location>
</feature>
<feature type="strand" evidence="3">
    <location>
        <begin position="687"/>
        <end position="690"/>
    </location>
</feature>
<feature type="helix" evidence="3">
    <location>
        <begin position="691"/>
        <end position="701"/>
    </location>
</feature>
<feature type="helix" evidence="3">
    <location>
        <begin position="734"/>
        <end position="737"/>
    </location>
</feature>
<feature type="turn" evidence="3">
    <location>
        <begin position="740"/>
        <end position="744"/>
    </location>
</feature>
<feature type="strand" evidence="3">
    <location>
        <begin position="745"/>
        <end position="747"/>
    </location>
</feature>
<feature type="helix" evidence="3">
    <location>
        <begin position="748"/>
        <end position="750"/>
    </location>
</feature>
<feature type="helix" evidence="3">
    <location>
        <begin position="753"/>
        <end position="762"/>
    </location>
</feature>
<feature type="helix" evidence="3">
    <location>
        <begin position="763"/>
        <end position="765"/>
    </location>
</feature>
<feature type="turn" evidence="3">
    <location>
        <begin position="772"/>
        <end position="776"/>
    </location>
</feature>
<feature type="strand" evidence="3">
    <location>
        <begin position="780"/>
        <end position="787"/>
    </location>
</feature>
<feature type="strand" evidence="3">
    <location>
        <begin position="792"/>
        <end position="794"/>
    </location>
</feature>
<feature type="helix" evidence="3">
    <location>
        <begin position="798"/>
        <end position="801"/>
    </location>
</feature>
<feature type="turn" evidence="3">
    <location>
        <begin position="802"/>
        <end position="805"/>
    </location>
</feature>
<feature type="strand" evidence="3">
    <location>
        <begin position="810"/>
        <end position="816"/>
    </location>
</feature>
<feature type="strand" evidence="3">
    <location>
        <begin position="825"/>
        <end position="831"/>
    </location>
</feature>
<feature type="helix" evidence="3">
    <location>
        <begin position="832"/>
        <end position="836"/>
    </location>
</feature>
<feature type="turn" evidence="3">
    <location>
        <begin position="837"/>
        <end position="840"/>
    </location>
</feature>
<feature type="strand" evidence="3">
    <location>
        <begin position="842"/>
        <end position="851"/>
    </location>
</feature>
<feature type="turn" evidence="3">
    <location>
        <begin position="868"/>
        <end position="870"/>
    </location>
</feature>
<feature type="strand" evidence="3">
    <location>
        <begin position="871"/>
        <end position="873"/>
    </location>
</feature>
<feature type="strand" evidence="3">
    <location>
        <begin position="893"/>
        <end position="895"/>
    </location>
</feature>
<feature type="strand" evidence="3">
    <location>
        <begin position="899"/>
        <end position="901"/>
    </location>
</feature>
<feature type="strand" evidence="3">
    <location>
        <begin position="903"/>
        <end position="906"/>
    </location>
</feature>
<feature type="turn" evidence="3">
    <location>
        <begin position="914"/>
        <end position="916"/>
    </location>
</feature>
<feature type="strand" evidence="3">
    <location>
        <begin position="923"/>
        <end position="925"/>
    </location>
</feature>
<feature type="strand" evidence="3">
    <location>
        <begin position="935"/>
        <end position="945"/>
    </location>
</feature>
<feature type="strand" evidence="3">
    <location>
        <begin position="951"/>
        <end position="961"/>
    </location>
</feature>
<feature type="strand" evidence="3">
    <location>
        <begin position="968"/>
        <end position="971"/>
    </location>
</feature>
<feature type="strand" evidence="3">
    <location>
        <begin position="976"/>
        <end position="983"/>
    </location>
</feature>
<feature type="helix" evidence="3">
    <location>
        <begin position="985"/>
        <end position="987"/>
    </location>
</feature>
<feature type="strand" evidence="3">
    <location>
        <begin position="998"/>
        <end position="1001"/>
    </location>
</feature>
<feature type="helix" evidence="3">
    <location>
        <begin position="1005"/>
        <end position="1009"/>
    </location>
</feature>
<feature type="helix" evidence="3">
    <location>
        <begin position="1012"/>
        <end position="1027"/>
    </location>
</feature>
<feature type="helix" evidence="3">
    <location>
        <begin position="1041"/>
        <end position="1049"/>
    </location>
</feature>
<feature type="turn" evidence="3">
    <location>
        <begin position="1050"/>
        <end position="1052"/>
    </location>
</feature>
<feature type="strand" evidence="3">
    <location>
        <begin position="1057"/>
        <end position="1059"/>
    </location>
</feature>
<feature type="turn" evidence="3">
    <location>
        <begin position="1064"/>
        <end position="1066"/>
    </location>
</feature>
<feature type="strand" evidence="3">
    <location>
        <begin position="1074"/>
        <end position="1085"/>
    </location>
</feature>
<feature type="helix" evidence="3">
    <location>
        <begin position="1088"/>
        <end position="1090"/>
    </location>
</feature>
<feature type="strand" evidence="3">
    <location>
        <begin position="1093"/>
        <end position="1097"/>
    </location>
</feature>
<feature type="turn" evidence="3">
    <location>
        <begin position="1102"/>
        <end position="1104"/>
    </location>
</feature>
<feature type="turn" evidence="3">
    <location>
        <begin position="1111"/>
        <end position="1114"/>
    </location>
</feature>
<feature type="strand" evidence="3">
    <location>
        <begin position="1117"/>
        <end position="1119"/>
    </location>
</feature>
<feature type="helix" evidence="3">
    <location>
        <begin position="1121"/>
        <end position="1130"/>
    </location>
</feature>
<feature type="helix" evidence="3">
    <location>
        <begin position="1133"/>
        <end position="1140"/>
    </location>
</feature>
<feature type="turn" evidence="3">
    <location>
        <begin position="1141"/>
        <end position="1145"/>
    </location>
</feature>
<feature type="strand" evidence="3">
    <location>
        <begin position="1146"/>
        <end position="1152"/>
    </location>
</feature>
<feature type="turn" evidence="3">
    <location>
        <begin position="1153"/>
        <end position="1155"/>
    </location>
</feature>
<feature type="strand" evidence="3">
    <location>
        <begin position="1160"/>
        <end position="1162"/>
    </location>
</feature>
<feature type="turn" evidence="3">
    <location>
        <begin position="1163"/>
        <end position="1166"/>
    </location>
</feature>
<feature type="strand" evidence="3">
    <location>
        <begin position="1167"/>
        <end position="1170"/>
    </location>
</feature>
<feature type="turn" evidence="3">
    <location>
        <begin position="1171"/>
        <end position="1174"/>
    </location>
</feature>
<feature type="strand" evidence="3">
    <location>
        <begin position="1175"/>
        <end position="1177"/>
    </location>
</feature>
<feature type="strand" evidence="3">
    <location>
        <begin position="1179"/>
        <end position="1185"/>
    </location>
</feature>
<feature type="helix" evidence="3">
    <location>
        <begin position="1186"/>
        <end position="1196"/>
    </location>
</feature>
<feature type="turn" evidence="3">
    <location>
        <begin position="1197"/>
        <end position="1199"/>
    </location>
</feature>
<feature type="strand" evidence="3">
    <location>
        <begin position="1203"/>
        <end position="1207"/>
    </location>
</feature>
<protein>
    <recommendedName>
        <fullName>DNA-directed RNA polymerase II subunit RPB2</fullName>
        <shortName>RNA polymerase II subunit 2</shortName>
        <shortName>RNA polymerase II subunit B2</shortName>
        <ecNumber>2.7.7.6</ecNumber>
    </recommendedName>
    <alternativeName>
        <fullName>DNA-directed RNA polymerase II 138 kDa polypeptide</fullName>
    </alternativeName>
</protein>